<protein>
    <recommendedName>
        <fullName>Tyrosine 3-monooxygenase</fullName>
        <ecNumber evidence="2">1.14.16.2</ecNumber>
    </recommendedName>
    <alternativeName>
        <fullName>Tyrosine 3-hydroxylase</fullName>
        <shortName>TH</shortName>
    </alternativeName>
</protein>
<keyword id="KW-0127">Catecholamine biosynthesis</keyword>
<keyword id="KW-0966">Cell projection</keyword>
<keyword id="KW-0963">Cytoplasm</keyword>
<keyword id="KW-0968">Cytoplasmic vesicle</keyword>
<keyword id="KW-0903">Direct protein sequencing</keyword>
<keyword id="KW-0408">Iron</keyword>
<keyword id="KW-0479">Metal-binding</keyword>
<keyword id="KW-0503">Monooxygenase</keyword>
<keyword id="KW-0530">Neurotransmitter biosynthesis</keyword>
<keyword id="KW-0539">Nucleus</keyword>
<keyword id="KW-0560">Oxidoreductase</keyword>
<keyword id="KW-0597">Phosphoprotein</keyword>
<keyword id="KW-1185">Reference proteome</keyword>
<keyword id="KW-0770">Synapse</keyword>
<accession>P17289</accession>
<gene>
    <name type="primary">TH</name>
</gene>
<name>TY3H_BOVIN</name>
<proteinExistence type="evidence at protein level"/>
<reference key="1">
    <citation type="journal article" date="1988" name="J. Neurosci. Res.">
        <title>Isolation and nucleotide sequence of a cDNA clone encoding bovine adrenal tyrosine hydroxylase: comparative analysis of tyrosine hydroxylase gene products.</title>
        <authorList>
            <person name="D'Mello S.R."/>
            <person name="Weisberg E.P."/>
            <person name="Stachowiak M.K."/>
            <person name="Turzai L.M."/>
            <person name="Gioio A.E."/>
            <person name="Kaplan B.B."/>
        </authorList>
    </citation>
    <scope>NUCLEOTIDE SEQUENCE [MRNA]</scope>
</reference>
<reference key="2">
    <citation type="journal article" date="1988" name="J. Neurochem.">
        <title>Predicted amino acid sequence of bovine tyrosine hydroxylase and its similarity to tyrosine hydroxylases from other species.</title>
        <authorList>
            <person name="Saadat S."/>
            <person name="Stehle A.D."/>
            <person name="Lamouroux A."/>
            <person name="Mallet J."/>
            <person name="Thoenen H."/>
        </authorList>
    </citation>
    <scope>NUCLEOTIDE SEQUENCE [MRNA]</scope>
</reference>
<reference key="3">
    <citation type="journal article" date="1988" name="Biochem. Biophys. Res. Commun.">
        <title>Characterization of the catalytic domain of bovine adrenal tyrosine hydroxylase.</title>
        <authorList>
            <person name="Abate C."/>
            <person name="Smith J.A."/>
            <person name="Joh T.H."/>
        </authorList>
    </citation>
    <scope>PROTEIN SEQUENCE OF 154-170</scope>
</reference>
<reference key="4">
    <citation type="journal article" date="1988" name="Biochim. Biophys. Acta">
        <title>Soluble tyrosine hydroxylase (tyrosine 3-monooxygenase) from bovine adrenal medulla: large-scale purification and physicochemical properties.</title>
        <authorList>
            <person name="Haavik J."/>
            <person name="Andersson K.K."/>
            <person name="Petersson L."/>
            <person name="Flatmark T."/>
        </authorList>
    </citation>
    <scope>PROTEIN SEQUENCE OF 2-28</scope>
    <source>
        <tissue>Adrenal medulla</tissue>
    </source>
</reference>
<reference key="5">
    <citation type="journal article" date="1993" name="Neurochem. Res.">
        <title>Multiple signaling pathways in bovine chromaffin cells regulate tyrosine hydroxylase phosphorylation at Ser19, Ser31, and Ser40.</title>
        <authorList>
            <person name="Haycock J.W."/>
        </authorList>
    </citation>
    <scope>PHOSPHORYLATION AT SER-19; SER-31 AND SER-40</scope>
</reference>
<sequence>MPTPNAASPQAKGFRRAVSELDAKQAEAIMSPRFVGRRQSLIQDARKEREKAEAAASSSESAEAAAWLERDGEAVLTLLFALPPTRPPALTRAIKVFETFEAHLHHLETRPAQPLRAGSPPLECFVRCEVPGPVVPALLSALRRVAEDVRAAGESKVLWFPRKVSELDKCHHLVTKFDPDLDLDHPGFSDQAYRQRRKLIAEIAFQYKQGDPIPHVEYTAEETATWKEVYSTLRGLYPTHACREHLEAFELLERFCGYREDRIPQLEDVSRFLKERTGFQLRPAAGLLSARDFLASLAFRVFQCTQYIRHASSPMHSPEPECCHELLGHVPMLADRTFAQFSQDIGLASLGVSDEEIEKLSTLYWFTVEFGLCKQNGEVKAYGAGLLSSYGELLHSLSEEPEIRAFDPDAAAVQPYQDQTYQPVYFVSESFSDAKDKLRSYASRIQRPFSVKFDPYTLAIDVLDSPHAIRHALDGVQDEMQALAHALNAIS</sequence>
<evidence type="ECO:0000250" key="1">
    <source>
        <dbReference type="UniProtKB" id="P04177"/>
    </source>
</evidence>
<evidence type="ECO:0000250" key="2">
    <source>
        <dbReference type="UniProtKB" id="P07101"/>
    </source>
</evidence>
<evidence type="ECO:0000250" key="3">
    <source>
        <dbReference type="UniProtKB" id="P24529"/>
    </source>
</evidence>
<evidence type="ECO:0000269" key="4">
    <source>
    </source>
</evidence>
<evidence type="ECO:0000269" key="5">
    <source>
    </source>
</evidence>
<evidence type="ECO:0000305" key="6"/>
<feature type="initiator methionine" description="Removed" evidence="4">
    <location>
        <position position="1"/>
    </location>
</feature>
<feature type="chain" id="PRO_0000205560" description="Tyrosine 3-monooxygenase">
    <location>
        <begin position="2"/>
        <end position="491"/>
    </location>
</feature>
<feature type="binding site" evidence="1">
    <location>
        <position position="324"/>
    </location>
    <ligand>
        <name>Fe cation</name>
        <dbReference type="ChEBI" id="CHEBI:24875"/>
    </ligand>
</feature>
<feature type="binding site" evidence="1">
    <location>
        <position position="329"/>
    </location>
    <ligand>
        <name>Fe cation</name>
        <dbReference type="ChEBI" id="CHEBI:24875"/>
    </ligand>
</feature>
<feature type="binding site" evidence="1">
    <location>
        <position position="369"/>
    </location>
    <ligand>
        <name>Fe cation</name>
        <dbReference type="ChEBI" id="CHEBI:24875"/>
    </ligand>
</feature>
<feature type="site" description="Important for substrate specificity" evidence="1">
    <location>
        <position position="418"/>
    </location>
</feature>
<feature type="modified residue" description="Phosphoserine; by CaMK2" evidence="5">
    <location>
        <position position="19"/>
    </location>
</feature>
<feature type="modified residue" description="Phosphoserine" evidence="5">
    <location>
        <position position="31"/>
    </location>
</feature>
<feature type="modified residue" description="Phosphoserine; by CaMK2 and PKA" evidence="5">
    <location>
        <position position="40"/>
    </location>
</feature>
<feature type="modified residue" description="Phosphoserine" evidence="3">
    <location>
        <position position="465"/>
    </location>
</feature>
<feature type="sequence conflict" description="In Ref. 2; AAA30798." evidence="6" ref="2">
    <original>AAWL</original>
    <variation>GSLV</variation>
    <location>
        <begin position="65"/>
        <end position="68"/>
    </location>
</feature>
<feature type="sequence conflict" description="In Ref. 2; AAA30798." evidence="6" ref="2">
    <original>E</original>
    <variation>K</variation>
    <location>
        <position position="73"/>
    </location>
</feature>
<feature type="sequence conflict" description="In Ref. 2; AAA30798." evidence="6" ref="2">
    <original>P</original>
    <variation>R</variation>
    <location>
        <position position="83"/>
    </location>
</feature>
<feature type="sequence conflict" description="In Ref. 2; AAA30798." evidence="6" ref="2">
    <original>R</original>
    <variation>K</variation>
    <location>
        <position position="86"/>
    </location>
</feature>
<feature type="sequence conflict" description="In Ref. 2; AAA30798." evidence="6" ref="2">
    <original>A</original>
    <variation>V</variation>
    <location>
        <position position="284"/>
    </location>
</feature>
<feature type="sequence conflict" description="In Ref. 2; AAA30798." evidence="6" ref="2">
    <original>E</original>
    <variation>D</variation>
    <location>
        <position position="321"/>
    </location>
</feature>
<feature type="sequence conflict" description="In Ref. 2; AAA30798." evidence="6" ref="2">
    <original>GHV</original>
    <variation>AHG</variation>
    <location>
        <begin position="328"/>
        <end position="330"/>
    </location>
</feature>
<feature type="sequence conflict" description="In Ref. 2; AAA30798." evidence="6" ref="2">
    <original>K</original>
    <variation>N</variation>
    <location>
        <position position="380"/>
    </location>
</feature>
<feature type="sequence conflict" description="In Ref. 2; AAA30798." evidence="6" ref="2">
    <original>H</original>
    <variation>R</variation>
    <location>
        <position position="471"/>
    </location>
</feature>
<dbReference type="EC" id="1.14.16.2" evidence="2"/>
<dbReference type="EMBL" id="M36794">
    <property type="protein sequence ID" value="AAA30779.1"/>
    <property type="molecule type" value="mRNA"/>
</dbReference>
<dbReference type="EMBL" id="M36705">
    <property type="protein sequence ID" value="AAA30798.1"/>
    <property type="molecule type" value="mRNA"/>
</dbReference>
<dbReference type="PIR" id="I45983">
    <property type="entry name" value="I45983"/>
</dbReference>
<dbReference type="PIR" id="JL0039">
    <property type="entry name" value="JL0039"/>
</dbReference>
<dbReference type="RefSeq" id="NP_776309.1">
    <property type="nucleotide sequence ID" value="NM_173884.2"/>
</dbReference>
<dbReference type="SMR" id="P17289"/>
<dbReference type="FunCoup" id="P17289">
    <property type="interactions" value="217"/>
</dbReference>
<dbReference type="STRING" id="9913.ENSBTAP00000071086"/>
<dbReference type="BindingDB" id="P17289"/>
<dbReference type="ChEMBL" id="CHEMBL3713"/>
<dbReference type="iPTMnet" id="P17289"/>
<dbReference type="PaxDb" id="9913-ENSBTAP00000038050"/>
<dbReference type="GeneID" id="280707"/>
<dbReference type="KEGG" id="bta:280707"/>
<dbReference type="CTD" id="7054"/>
<dbReference type="eggNOG" id="KOG3820">
    <property type="taxonomic scope" value="Eukaryota"/>
</dbReference>
<dbReference type="InParanoid" id="P17289"/>
<dbReference type="OrthoDB" id="983542at2759"/>
<dbReference type="SABIO-RK" id="P17289"/>
<dbReference type="UniPathway" id="UPA00747">
    <property type="reaction ID" value="UER00733"/>
</dbReference>
<dbReference type="PRO" id="PR:P17289"/>
<dbReference type="Proteomes" id="UP000009136">
    <property type="component" value="Unplaced"/>
</dbReference>
<dbReference type="GO" id="GO:0030424">
    <property type="term" value="C:axon"/>
    <property type="evidence" value="ECO:0000318"/>
    <property type="project" value="GO_Central"/>
</dbReference>
<dbReference type="GO" id="GO:0005737">
    <property type="term" value="C:cytoplasm"/>
    <property type="evidence" value="ECO:0000250"/>
    <property type="project" value="UniProtKB"/>
</dbReference>
<dbReference type="GO" id="GO:0005634">
    <property type="term" value="C:nucleus"/>
    <property type="evidence" value="ECO:0000250"/>
    <property type="project" value="UniProtKB"/>
</dbReference>
<dbReference type="GO" id="GO:0043204">
    <property type="term" value="C:perikaryon"/>
    <property type="evidence" value="ECO:0000318"/>
    <property type="project" value="GO_Central"/>
</dbReference>
<dbReference type="GO" id="GO:0048471">
    <property type="term" value="C:perinuclear region of cytoplasm"/>
    <property type="evidence" value="ECO:0000250"/>
    <property type="project" value="UniProtKB"/>
</dbReference>
<dbReference type="GO" id="GO:0008021">
    <property type="term" value="C:synaptic vesicle"/>
    <property type="evidence" value="ECO:0007669"/>
    <property type="project" value="UniProtKB-SubCell"/>
</dbReference>
<dbReference type="GO" id="GO:0005506">
    <property type="term" value="F:iron ion binding"/>
    <property type="evidence" value="ECO:0007669"/>
    <property type="project" value="InterPro"/>
</dbReference>
<dbReference type="GO" id="GO:0004511">
    <property type="term" value="F:tyrosine 3-monooxygenase activity"/>
    <property type="evidence" value="ECO:0000318"/>
    <property type="project" value="GO_Central"/>
</dbReference>
<dbReference type="GO" id="GO:0006585">
    <property type="term" value="P:dopamine biosynthetic process from tyrosine"/>
    <property type="evidence" value="ECO:0000318"/>
    <property type="project" value="GO_Central"/>
</dbReference>
<dbReference type="GO" id="GO:0007507">
    <property type="term" value="P:heart development"/>
    <property type="evidence" value="ECO:0000318"/>
    <property type="project" value="GO_Central"/>
</dbReference>
<dbReference type="GO" id="GO:1990384">
    <property type="term" value="P:hyaloid vascular plexus regression"/>
    <property type="evidence" value="ECO:0000250"/>
    <property type="project" value="UniProtKB"/>
</dbReference>
<dbReference type="GO" id="GO:0045471">
    <property type="term" value="P:response to ethanol"/>
    <property type="evidence" value="ECO:0000318"/>
    <property type="project" value="GO_Central"/>
</dbReference>
<dbReference type="GO" id="GO:0001666">
    <property type="term" value="P:response to hypoxia"/>
    <property type="evidence" value="ECO:0000318"/>
    <property type="project" value="GO_Central"/>
</dbReference>
<dbReference type="CDD" id="cd03345">
    <property type="entry name" value="eu_TyrOH"/>
    <property type="match status" value="1"/>
</dbReference>
<dbReference type="FunFam" id="1.10.800.10:FF:000002">
    <property type="entry name" value="Tyrosine 3-monooxygenase"/>
    <property type="match status" value="1"/>
</dbReference>
<dbReference type="FunFam" id="3.30.70.260:FF:000024">
    <property type="entry name" value="Tyrosine 3-monooxygenase"/>
    <property type="match status" value="1"/>
</dbReference>
<dbReference type="Gene3D" id="3.30.70.260">
    <property type="match status" value="1"/>
</dbReference>
<dbReference type="Gene3D" id="1.10.800.10">
    <property type="entry name" value="Aromatic amino acid hydroxylase"/>
    <property type="match status" value="1"/>
</dbReference>
<dbReference type="InterPro" id="IPR045865">
    <property type="entry name" value="ACT-like_dom_sf"/>
</dbReference>
<dbReference type="InterPro" id="IPR001273">
    <property type="entry name" value="ArAA_hydroxylase"/>
</dbReference>
<dbReference type="InterPro" id="IPR036951">
    <property type="entry name" value="ArAA_hydroxylase_sf"/>
</dbReference>
<dbReference type="InterPro" id="IPR036329">
    <property type="entry name" value="Aro-AA_hydroxylase_C_sf"/>
</dbReference>
<dbReference type="InterPro" id="IPR019774">
    <property type="entry name" value="Aromatic-AA_hydroxylase_C"/>
</dbReference>
<dbReference type="InterPro" id="IPR041903">
    <property type="entry name" value="Eu_TyrOH_cat"/>
</dbReference>
<dbReference type="InterPro" id="IPR049321">
    <property type="entry name" value="TH_ACT"/>
</dbReference>
<dbReference type="InterPro" id="IPR005962">
    <property type="entry name" value="Tyr_3_mOase"/>
</dbReference>
<dbReference type="InterPro" id="IPR019773">
    <property type="entry name" value="Tyrosine_3-monooxygenase-like"/>
</dbReference>
<dbReference type="InterPro" id="IPR021164">
    <property type="entry name" value="Tyrosine_hydroxylase_CS"/>
</dbReference>
<dbReference type="NCBIfam" id="TIGR01269">
    <property type="entry name" value="Tyr_3_monoox"/>
    <property type="match status" value="1"/>
</dbReference>
<dbReference type="PANTHER" id="PTHR11473">
    <property type="entry name" value="AROMATIC AMINO ACID HYDROXYLASE"/>
    <property type="match status" value="1"/>
</dbReference>
<dbReference type="PANTHER" id="PTHR11473:SF18">
    <property type="entry name" value="TYROSINE 3-MONOOXYGENASE"/>
    <property type="match status" value="1"/>
</dbReference>
<dbReference type="Pfam" id="PF00351">
    <property type="entry name" value="Biopterin_H"/>
    <property type="match status" value="1"/>
</dbReference>
<dbReference type="Pfam" id="PF21417">
    <property type="entry name" value="TH_ACT"/>
    <property type="match status" value="1"/>
</dbReference>
<dbReference type="Pfam" id="PF12549">
    <property type="entry name" value="TOH_N"/>
    <property type="match status" value="2"/>
</dbReference>
<dbReference type="PIRSF" id="PIRSF000336">
    <property type="entry name" value="TH"/>
    <property type="match status" value="1"/>
</dbReference>
<dbReference type="PRINTS" id="PR00372">
    <property type="entry name" value="FYWHYDRXLASE"/>
</dbReference>
<dbReference type="SUPFAM" id="SSF55021">
    <property type="entry name" value="ACT-like"/>
    <property type="match status" value="1"/>
</dbReference>
<dbReference type="SUPFAM" id="SSF56534">
    <property type="entry name" value="Aromatic aminoacid monoxygenases, catalytic and oligomerization domains"/>
    <property type="match status" value="1"/>
</dbReference>
<dbReference type="PROSITE" id="PS51410">
    <property type="entry name" value="BH4_AAA_HYDROXYL_2"/>
    <property type="match status" value="1"/>
</dbReference>
<comment type="function">
    <text evidence="1 2 3">Catalyzes the conversion of L-tyrosine to L-dihydroxyphenylalanine (L-Dopa), the rate-limiting step in the biosynthesis of catecholamines, dopamine, noradrenaline, and adrenaline. Uses tetrahydrobiopterin and molecular oxygen to convert tyrosine to L-Dopa (By similarity). In addition to tyrosine, is able to catalyze the hydroxylation of phenylalanine and tryptophan with lower specificity (By similarity). Positively regulates the regression of retinal hyaloid vessels during postnatal development (By similarity).</text>
</comment>
<comment type="catalytic activity">
    <reaction evidence="2">
        <text>(6R)-L-erythro-5,6,7,8-tetrahydrobiopterin + L-tyrosine + O2 = (4aS,6R)-4a-hydroxy-L-erythro-5,6,7,8-tetrahydrobiopterin + L-dopa</text>
        <dbReference type="Rhea" id="RHEA:18201"/>
        <dbReference type="ChEBI" id="CHEBI:15379"/>
        <dbReference type="ChEBI" id="CHEBI:15642"/>
        <dbReference type="ChEBI" id="CHEBI:57504"/>
        <dbReference type="ChEBI" id="CHEBI:58315"/>
        <dbReference type="ChEBI" id="CHEBI:59560"/>
        <dbReference type="EC" id="1.14.16.2"/>
    </reaction>
    <physiologicalReaction direction="left-to-right" evidence="2">
        <dbReference type="Rhea" id="RHEA:18202"/>
    </physiologicalReaction>
</comment>
<comment type="cofactor">
    <cofactor evidence="1">
        <name>Fe(2+)</name>
        <dbReference type="ChEBI" id="CHEBI:29033"/>
    </cofactor>
</comment>
<comment type="activity regulation">
    <text evidence="2">Inhibited in feedback fashion by the catecholamine neurotransmitters, especially by dopamine in competition with tetrahydrobiopterin. Phosphorylation of several Ser/Thr residues in the N-terminus regulates the catalytic activity. Ser-31 and Ser-40 are readily phosphorylated to activate the catalytic activity. A Cysteine modification induced by N-ethylmaleimide (NEM), inhibits tyrosine 3-monooxygenase activity through the modification of the Cys-170.</text>
</comment>
<comment type="pathway">
    <text evidence="2">Catecholamine biosynthesis; dopamine biosynthesis; dopamine from L-tyrosine: step 1/2.</text>
</comment>
<comment type="subunit">
    <text evidence="1 2">Homotetramer (By similarity). Interacts (when phosphorylated at Ser-19) with YWHAG; one YWHAG dimer bounds to one TH tetramer and this interaction may influence the phosphorylation and dephosphorylation of other sites (By similarity). Interacts with NT5DC2; the interaction results in reduced phosphorylation and decreased catalytic activity of TH (By similarity).</text>
</comment>
<comment type="subcellular location">
    <subcellularLocation>
        <location evidence="3">Cytoplasm</location>
        <location evidence="3">Perinuclear region</location>
    </subcellularLocation>
    <subcellularLocation>
        <location evidence="1">Nucleus</location>
    </subcellularLocation>
    <subcellularLocation>
        <location evidence="3">Cell projection</location>
        <location evidence="3">Axon</location>
    </subcellularLocation>
    <subcellularLocation>
        <location evidence="1">Cytoplasm</location>
    </subcellularLocation>
    <subcellularLocation>
        <location evidence="1">Cytoplasmic vesicle</location>
        <location evidence="1">Secretory vesicle</location>
        <location evidence="1">Synaptic vesicle</location>
    </subcellularLocation>
    <text evidence="1 2">When phosphorylated at Ser-19 shows a nuclear distribution and when phosphorylated at Ser-31 as well at Ser-40 shows a cytosolic distribution (By similarity). Expressed in dopaminergic axons and axon terminals (By similarity).</text>
</comment>
<comment type="PTM">
    <text evidence="1 2">Phosphorylated on Ser-19, Ser-31 and Ser-40 by several protein kinases with different site specificities. Phosphorylation at Ser-31 and Ser-40 leads to an increase of TH activity. Phosphorylation at Ser-40 activates the enzyme and also counteracts the feedback inhibition of TH by catecholamines (By similarity). Phosphorylation of Ser-19 and Ser-31 triggers the proteasomal degradation of TH through the ubiquitin-proteasome pathway (By similarity). Phosphorylation at Ser-31 facilitates transport of TH from the soma to the nerve terminals via the microtubule network (By similarity). Phosphorylation at Ser-19 induces the high-affinity binding to the 14-3-3 protein YWHAG; this interaction may influence the phosphorylation and dephosphorylation of other sites (By similarity). Ser-19 increases the phosphorylation at Ser-40 in a hierarchical manner, leading to increased activity (By similarity).</text>
</comment>
<comment type="similarity">
    <text evidence="6">Belongs to the biopterin-dependent aromatic amino acid hydroxylase family.</text>
</comment>
<organism>
    <name type="scientific">Bos taurus</name>
    <name type="common">Bovine</name>
    <dbReference type="NCBI Taxonomy" id="9913"/>
    <lineage>
        <taxon>Eukaryota</taxon>
        <taxon>Metazoa</taxon>
        <taxon>Chordata</taxon>
        <taxon>Craniata</taxon>
        <taxon>Vertebrata</taxon>
        <taxon>Euteleostomi</taxon>
        <taxon>Mammalia</taxon>
        <taxon>Eutheria</taxon>
        <taxon>Laurasiatheria</taxon>
        <taxon>Artiodactyla</taxon>
        <taxon>Ruminantia</taxon>
        <taxon>Pecora</taxon>
        <taxon>Bovidae</taxon>
        <taxon>Bovinae</taxon>
        <taxon>Bos</taxon>
    </lineage>
</organism>